<feature type="chain" id="PRO_1000135387" description="Histidinol-phosphate aminotransferase">
    <location>
        <begin position="1"/>
        <end position="355"/>
    </location>
</feature>
<feature type="modified residue" description="N6-(pyridoxal phosphate)lysine" evidence="1">
    <location>
        <position position="218"/>
    </location>
</feature>
<name>HIS8_CHLL2</name>
<gene>
    <name evidence="1" type="primary">hisC</name>
    <name type="ordered locus">Clim_1169</name>
</gene>
<reference key="1">
    <citation type="submission" date="2008-05" db="EMBL/GenBank/DDBJ databases">
        <title>Complete sequence of Chlorobium limicola DSM 245.</title>
        <authorList>
            <consortium name="US DOE Joint Genome Institute"/>
            <person name="Lucas S."/>
            <person name="Copeland A."/>
            <person name="Lapidus A."/>
            <person name="Glavina del Rio T."/>
            <person name="Dalin E."/>
            <person name="Tice H."/>
            <person name="Bruce D."/>
            <person name="Goodwin L."/>
            <person name="Pitluck S."/>
            <person name="Schmutz J."/>
            <person name="Larimer F."/>
            <person name="Land M."/>
            <person name="Hauser L."/>
            <person name="Kyrpides N."/>
            <person name="Ovchinnikova G."/>
            <person name="Zhao F."/>
            <person name="Li T."/>
            <person name="Liu Z."/>
            <person name="Overmann J."/>
            <person name="Bryant D.A."/>
            <person name="Richardson P."/>
        </authorList>
    </citation>
    <scope>NUCLEOTIDE SEQUENCE [LARGE SCALE GENOMIC DNA]</scope>
    <source>
        <strain>DSM 245 / NBRC 103803 / 6330</strain>
    </source>
</reference>
<dbReference type="EC" id="2.6.1.9" evidence="1"/>
<dbReference type="EMBL" id="CP001097">
    <property type="protein sequence ID" value="ACD90237.1"/>
    <property type="molecule type" value="Genomic_DNA"/>
</dbReference>
<dbReference type="RefSeq" id="WP_012466114.1">
    <property type="nucleotide sequence ID" value="NC_010803.1"/>
</dbReference>
<dbReference type="SMR" id="B3ECG2"/>
<dbReference type="STRING" id="290315.Clim_1169"/>
<dbReference type="KEGG" id="cli:Clim_1169"/>
<dbReference type="eggNOG" id="COG0079">
    <property type="taxonomic scope" value="Bacteria"/>
</dbReference>
<dbReference type="HOGENOM" id="CLU_017584_3_1_10"/>
<dbReference type="OrthoDB" id="9813612at2"/>
<dbReference type="UniPathway" id="UPA00031">
    <property type="reaction ID" value="UER00012"/>
</dbReference>
<dbReference type="Proteomes" id="UP000008841">
    <property type="component" value="Chromosome"/>
</dbReference>
<dbReference type="GO" id="GO:0004400">
    <property type="term" value="F:histidinol-phosphate transaminase activity"/>
    <property type="evidence" value="ECO:0007669"/>
    <property type="project" value="UniProtKB-UniRule"/>
</dbReference>
<dbReference type="GO" id="GO:0030170">
    <property type="term" value="F:pyridoxal phosphate binding"/>
    <property type="evidence" value="ECO:0007669"/>
    <property type="project" value="InterPro"/>
</dbReference>
<dbReference type="GO" id="GO:0000105">
    <property type="term" value="P:L-histidine biosynthetic process"/>
    <property type="evidence" value="ECO:0007669"/>
    <property type="project" value="UniProtKB-UniRule"/>
</dbReference>
<dbReference type="CDD" id="cd00609">
    <property type="entry name" value="AAT_like"/>
    <property type="match status" value="1"/>
</dbReference>
<dbReference type="Gene3D" id="3.90.1150.10">
    <property type="entry name" value="Aspartate Aminotransferase, domain 1"/>
    <property type="match status" value="1"/>
</dbReference>
<dbReference type="Gene3D" id="3.40.640.10">
    <property type="entry name" value="Type I PLP-dependent aspartate aminotransferase-like (Major domain)"/>
    <property type="match status" value="1"/>
</dbReference>
<dbReference type="HAMAP" id="MF_01023">
    <property type="entry name" value="HisC_aminotrans_2"/>
    <property type="match status" value="1"/>
</dbReference>
<dbReference type="InterPro" id="IPR001917">
    <property type="entry name" value="Aminotrans_II_pyridoxalP_BS"/>
</dbReference>
<dbReference type="InterPro" id="IPR004839">
    <property type="entry name" value="Aminotransferase_I/II_large"/>
</dbReference>
<dbReference type="InterPro" id="IPR005861">
    <property type="entry name" value="HisP_aminotrans"/>
</dbReference>
<dbReference type="InterPro" id="IPR015424">
    <property type="entry name" value="PyrdxlP-dep_Trfase"/>
</dbReference>
<dbReference type="InterPro" id="IPR015421">
    <property type="entry name" value="PyrdxlP-dep_Trfase_major"/>
</dbReference>
<dbReference type="InterPro" id="IPR015422">
    <property type="entry name" value="PyrdxlP-dep_Trfase_small"/>
</dbReference>
<dbReference type="NCBIfam" id="TIGR01141">
    <property type="entry name" value="hisC"/>
    <property type="match status" value="1"/>
</dbReference>
<dbReference type="PANTHER" id="PTHR42885:SF2">
    <property type="entry name" value="HISTIDINOL-PHOSPHATE AMINOTRANSFERASE"/>
    <property type="match status" value="1"/>
</dbReference>
<dbReference type="PANTHER" id="PTHR42885">
    <property type="entry name" value="HISTIDINOL-PHOSPHATE AMINOTRANSFERASE-RELATED"/>
    <property type="match status" value="1"/>
</dbReference>
<dbReference type="Pfam" id="PF00155">
    <property type="entry name" value="Aminotran_1_2"/>
    <property type="match status" value="1"/>
</dbReference>
<dbReference type="SUPFAM" id="SSF53383">
    <property type="entry name" value="PLP-dependent transferases"/>
    <property type="match status" value="1"/>
</dbReference>
<dbReference type="PROSITE" id="PS00599">
    <property type="entry name" value="AA_TRANSFER_CLASS_2"/>
    <property type="match status" value="1"/>
</dbReference>
<evidence type="ECO:0000255" key="1">
    <source>
        <dbReference type="HAMAP-Rule" id="MF_01023"/>
    </source>
</evidence>
<organism>
    <name type="scientific">Chlorobium limicola (strain DSM 245 / NBRC 103803 / 6330)</name>
    <dbReference type="NCBI Taxonomy" id="290315"/>
    <lineage>
        <taxon>Bacteria</taxon>
        <taxon>Pseudomonadati</taxon>
        <taxon>Chlorobiota</taxon>
        <taxon>Chlorobiia</taxon>
        <taxon>Chlorobiales</taxon>
        <taxon>Chlorobiaceae</taxon>
        <taxon>Chlorobium/Pelodictyon group</taxon>
        <taxon>Chlorobium</taxon>
    </lineage>
</organism>
<keyword id="KW-0028">Amino-acid biosynthesis</keyword>
<keyword id="KW-0032">Aminotransferase</keyword>
<keyword id="KW-0368">Histidine biosynthesis</keyword>
<keyword id="KW-0663">Pyridoxal phosphate</keyword>
<keyword id="KW-0808">Transferase</keyword>
<proteinExistence type="inferred from homology"/>
<sequence length="355" mass="40041">MKRDIKDLLNPALRNIAVYKVDGGQEAAVKLNQNESPFDLPFWMKEQILEEFRLEPWNRYPDILPFRGMDAYADFLGVSRDSVIMSNGSNEMLYTIFLACLSPGKKILIPEPSFSLYEKIALLLQADIVSVPMQPSLDFDADSLIERAKQEKVDFIVLSTPNNPTGKSLASPDIARIVRECDAIVLVDEAYIEFSREHSVLALIEECPNLIVLRTMSKALALAGMRIGFAIANPLLMAEIAKPKIPFASSRFAEITLQHVLRYYYLVTDAVSYILGERERIYAELEGIASLDVFQSDTNFLIIRVPDAQKVFHALVSSGILVRNVSGYLLMENCLRFNIGLREENDQLLEKLKSL</sequence>
<protein>
    <recommendedName>
        <fullName evidence="1">Histidinol-phosphate aminotransferase</fullName>
        <ecNumber evidence="1">2.6.1.9</ecNumber>
    </recommendedName>
    <alternativeName>
        <fullName evidence="1">Imidazole acetol-phosphate transaminase</fullName>
    </alternativeName>
</protein>
<accession>B3ECG2</accession>
<comment type="catalytic activity">
    <reaction evidence="1">
        <text>L-histidinol phosphate + 2-oxoglutarate = 3-(imidazol-4-yl)-2-oxopropyl phosphate + L-glutamate</text>
        <dbReference type="Rhea" id="RHEA:23744"/>
        <dbReference type="ChEBI" id="CHEBI:16810"/>
        <dbReference type="ChEBI" id="CHEBI:29985"/>
        <dbReference type="ChEBI" id="CHEBI:57766"/>
        <dbReference type="ChEBI" id="CHEBI:57980"/>
        <dbReference type="EC" id="2.6.1.9"/>
    </reaction>
</comment>
<comment type="cofactor">
    <cofactor evidence="1">
        <name>pyridoxal 5'-phosphate</name>
        <dbReference type="ChEBI" id="CHEBI:597326"/>
    </cofactor>
</comment>
<comment type="pathway">
    <text evidence="1">Amino-acid biosynthesis; L-histidine biosynthesis; L-histidine from 5-phospho-alpha-D-ribose 1-diphosphate: step 7/9.</text>
</comment>
<comment type="subunit">
    <text evidence="1">Homodimer.</text>
</comment>
<comment type="similarity">
    <text evidence="1">Belongs to the class-II pyridoxal-phosphate-dependent aminotransferase family. Histidinol-phosphate aminotransferase subfamily.</text>
</comment>